<sequence length="471" mass="52574">MSKKYDAGVKEYRDTYWTPEYVPLDTDLLACFKCTGQEGVPREEVAAAVAAESSTGTWSTVWSELLTDLEFYKGRCYRIEDVPGDPEAFYAFIAYPLDLFEEGSITNVLTSLVGNVFGFKALRHLRLEDIRFPIAFIKTCGGPPNGIVVERDRLNKYGRPLLGCTIKPKLGLSGKNYGRVVYECLRGGLDLTKDDENINSQPFQRWRERFEFVAEAVKLAQQETGEVKGHYLNCTANTPEELYERAEFAKELDMPIIMHDYITGGFTANTGLANWCRKNGMLLHIHRAMHAVIDRHPKHGIHFRVLAKCLRLSGGDQLHTGTVVGKLEGDRQTTLGYIDNLRESFVPEDRSRGNFFDQDWGSMPGVFAVASGGIHVWHMPALLAIFGDDSCLQFGGGTHGHPWGSAAGAAANRVALEACVKARNAGREIEKESRDILMEAAKHSPELAIALETWKEIKFEFDTVDKLDVQG</sequence>
<dbReference type="EC" id="4.1.1.39" evidence="1"/>
<dbReference type="EMBL" id="CP000111">
    <property type="protein sequence ID" value="ABB49611.1"/>
    <property type="molecule type" value="Genomic_DNA"/>
</dbReference>
<dbReference type="RefSeq" id="WP_002805854.1">
    <property type="nucleotide sequence ID" value="NC_007577.1"/>
</dbReference>
<dbReference type="SMR" id="Q31BY4"/>
<dbReference type="STRING" id="74546.PMT9312_0550"/>
<dbReference type="KEGG" id="pmi:PMT9312_0550"/>
<dbReference type="eggNOG" id="COG1850">
    <property type="taxonomic scope" value="Bacteria"/>
</dbReference>
<dbReference type="HOGENOM" id="CLU_031450_2_0_3"/>
<dbReference type="OrthoDB" id="9770811at2"/>
<dbReference type="Proteomes" id="UP000002715">
    <property type="component" value="Chromosome"/>
</dbReference>
<dbReference type="GO" id="GO:0031470">
    <property type="term" value="C:carboxysome"/>
    <property type="evidence" value="ECO:0007669"/>
    <property type="project" value="UniProtKB-SubCell"/>
</dbReference>
<dbReference type="GO" id="GO:0000287">
    <property type="term" value="F:magnesium ion binding"/>
    <property type="evidence" value="ECO:0007669"/>
    <property type="project" value="UniProtKB-UniRule"/>
</dbReference>
<dbReference type="GO" id="GO:0004497">
    <property type="term" value="F:monooxygenase activity"/>
    <property type="evidence" value="ECO:0007669"/>
    <property type="project" value="UniProtKB-KW"/>
</dbReference>
<dbReference type="GO" id="GO:0016984">
    <property type="term" value="F:ribulose-bisphosphate carboxylase activity"/>
    <property type="evidence" value="ECO:0007669"/>
    <property type="project" value="UniProtKB-UniRule"/>
</dbReference>
<dbReference type="GO" id="GO:0009853">
    <property type="term" value="P:photorespiration"/>
    <property type="evidence" value="ECO:0007669"/>
    <property type="project" value="UniProtKB-KW"/>
</dbReference>
<dbReference type="GO" id="GO:0019253">
    <property type="term" value="P:reductive pentose-phosphate cycle"/>
    <property type="evidence" value="ECO:0007669"/>
    <property type="project" value="UniProtKB-UniRule"/>
</dbReference>
<dbReference type="Gene3D" id="3.20.20.110">
    <property type="entry name" value="Ribulose bisphosphate carboxylase, large subunit, C-terminal domain"/>
    <property type="match status" value="1"/>
</dbReference>
<dbReference type="Gene3D" id="3.30.70.150">
    <property type="entry name" value="RuBisCO large subunit, N-terminal domain"/>
    <property type="match status" value="1"/>
</dbReference>
<dbReference type="HAMAP" id="MF_01338">
    <property type="entry name" value="RuBisCO_L_type1"/>
    <property type="match status" value="1"/>
</dbReference>
<dbReference type="InterPro" id="IPR033966">
    <property type="entry name" value="RuBisCO"/>
</dbReference>
<dbReference type="InterPro" id="IPR000685">
    <property type="entry name" value="RuBisCO_lsu_C"/>
</dbReference>
<dbReference type="InterPro" id="IPR036376">
    <property type="entry name" value="RuBisCO_lsu_C_sf"/>
</dbReference>
<dbReference type="InterPro" id="IPR017443">
    <property type="entry name" value="RuBisCO_lsu_fd_N"/>
</dbReference>
<dbReference type="InterPro" id="IPR036422">
    <property type="entry name" value="RuBisCO_lsu_N_sf"/>
</dbReference>
<dbReference type="InterPro" id="IPR020888">
    <property type="entry name" value="RuBisCO_lsuI"/>
</dbReference>
<dbReference type="NCBIfam" id="NF003252">
    <property type="entry name" value="PRK04208.1"/>
    <property type="match status" value="1"/>
</dbReference>
<dbReference type="PANTHER" id="PTHR42704">
    <property type="entry name" value="RIBULOSE BISPHOSPHATE CARBOXYLASE"/>
    <property type="match status" value="1"/>
</dbReference>
<dbReference type="PANTHER" id="PTHR42704:SF17">
    <property type="entry name" value="RIBULOSE BISPHOSPHATE CARBOXYLASE LARGE CHAIN"/>
    <property type="match status" value="1"/>
</dbReference>
<dbReference type="Pfam" id="PF00016">
    <property type="entry name" value="RuBisCO_large"/>
    <property type="match status" value="1"/>
</dbReference>
<dbReference type="Pfam" id="PF02788">
    <property type="entry name" value="RuBisCO_large_N"/>
    <property type="match status" value="1"/>
</dbReference>
<dbReference type="SFLD" id="SFLDG01052">
    <property type="entry name" value="RuBisCO"/>
    <property type="match status" value="1"/>
</dbReference>
<dbReference type="SFLD" id="SFLDS00014">
    <property type="entry name" value="RuBisCO"/>
    <property type="match status" value="1"/>
</dbReference>
<dbReference type="SFLD" id="SFLDG00301">
    <property type="entry name" value="RuBisCO-like_proteins"/>
    <property type="match status" value="1"/>
</dbReference>
<dbReference type="SUPFAM" id="SSF51649">
    <property type="entry name" value="RuBisCo, C-terminal domain"/>
    <property type="match status" value="1"/>
</dbReference>
<dbReference type="SUPFAM" id="SSF54966">
    <property type="entry name" value="RuBisCO, large subunit, small (N-terminal) domain"/>
    <property type="match status" value="1"/>
</dbReference>
<evidence type="ECO:0000255" key="1">
    <source>
        <dbReference type="HAMAP-Rule" id="MF_01338"/>
    </source>
</evidence>
<protein>
    <recommendedName>
        <fullName evidence="1">Ribulose bisphosphate carboxylase large chain</fullName>
        <shortName evidence="1">RuBisCO large subunit</shortName>
        <ecNumber evidence="1">4.1.1.39</ecNumber>
    </recommendedName>
</protein>
<comment type="function">
    <text evidence="1">RuBisCO catalyzes two reactions: the carboxylation of D-ribulose 1,5-bisphosphate, the primary event in carbon dioxide fixation, as well as the oxidative fragmentation of the pentose substrate in the photorespiration process. Both reactions occur simultaneously and in competition at the same active site.</text>
</comment>
<comment type="catalytic activity">
    <reaction evidence="1">
        <text>2 (2R)-3-phosphoglycerate + 2 H(+) = D-ribulose 1,5-bisphosphate + CO2 + H2O</text>
        <dbReference type="Rhea" id="RHEA:23124"/>
        <dbReference type="ChEBI" id="CHEBI:15377"/>
        <dbReference type="ChEBI" id="CHEBI:15378"/>
        <dbReference type="ChEBI" id="CHEBI:16526"/>
        <dbReference type="ChEBI" id="CHEBI:57870"/>
        <dbReference type="ChEBI" id="CHEBI:58272"/>
        <dbReference type="EC" id="4.1.1.39"/>
    </reaction>
</comment>
<comment type="catalytic activity">
    <reaction evidence="1">
        <text>D-ribulose 1,5-bisphosphate + O2 = 2-phosphoglycolate + (2R)-3-phosphoglycerate + 2 H(+)</text>
        <dbReference type="Rhea" id="RHEA:36631"/>
        <dbReference type="ChEBI" id="CHEBI:15378"/>
        <dbReference type="ChEBI" id="CHEBI:15379"/>
        <dbReference type="ChEBI" id="CHEBI:57870"/>
        <dbReference type="ChEBI" id="CHEBI:58033"/>
        <dbReference type="ChEBI" id="CHEBI:58272"/>
    </reaction>
</comment>
<comment type="cofactor">
    <cofactor evidence="1">
        <name>Mg(2+)</name>
        <dbReference type="ChEBI" id="CHEBI:18420"/>
    </cofactor>
    <text evidence="1">Binds 1 Mg(2+) ion per subunit.</text>
</comment>
<comment type="subunit">
    <text evidence="1">Heterohexadecamer of 8 large chains and 8 small chains.</text>
</comment>
<comment type="subcellular location">
    <subcellularLocation>
        <location evidence="1">Carboxysome</location>
    </subcellularLocation>
</comment>
<comment type="miscellaneous">
    <text evidence="1">The basic functional RuBisCO is composed of a large chain homodimer in a 'head-to-tail' conformation. In form I RuBisCO this homodimer is arranged in a barrel-like tetramer with the small subunits forming a tetrameric 'cap' on each end of the 'barrel'.</text>
</comment>
<comment type="similarity">
    <text evidence="1">Belongs to the RuBisCO large chain family. Type I subfamily.</text>
</comment>
<accession>Q31BY4</accession>
<keyword id="KW-1283">Bacterial microcompartment</keyword>
<keyword id="KW-0113">Calvin cycle</keyword>
<keyword id="KW-0120">Carbon dioxide fixation</keyword>
<keyword id="KW-1282">Carboxysome</keyword>
<keyword id="KW-0456">Lyase</keyword>
<keyword id="KW-0460">Magnesium</keyword>
<keyword id="KW-0479">Metal-binding</keyword>
<keyword id="KW-0503">Monooxygenase</keyword>
<keyword id="KW-0560">Oxidoreductase</keyword>
<keyword id="KW-0601">Photorespiration</keyword>
<keyword id="KW-0602">Photosynthesis</keyword>
<feature type="chain" id="PRO_0000251453" description="Ribulose bisphosphate carboxylase large chain">
    <location>
        <begin position="1"/>
        <end position="471"/>
    </location>
</feature>
<feature type="active site" description="Proton acceptor" evidence="1">
    <location>
        <position position="167"/>
    </location>
</feature>
<feature type="active site" description="Proton acceptor" evidence="1">
    <location>
        <position position="286"/>
    </location>
</feature>
<feature type="binding site" description="in homodimeric partner" evidence="1">
    <location>
        <position position="115"/>
    </location>
    <ligand>
        <name>substrate</name>
    </ligand>
</feature>
<feature type="binding site" evidence="1">
    <location>
        <position position="165"/>
    </location>
    <ligand>
        <name>substrate</name>
    </ligand>
</feature>
<feature type="binding site" evidence="1">
    <location>
        <position position="169"/>
    </location>
    <ligand>
        <name>substrate</name>
    </ligand>
</feature>
<feature type="binding site" description="via carbamate group" evidence="1">
    <location>
        <position position="193"/>
    </location>
    <ligand>
        <name>Mg(2+)</name>
        <dbReference type="ChEBI" id="CHEBI:18420"/>
    </ligand>
</feature>
<feature type="binding site" evidence="1">
    <location>
        <position position="195"/>
    </location>
    <ligand>
        <name>Mg(2+)</name>
        <dbReference type="ChEBI" id="CHEBI:18420"/>
    </ligand>
</feature>
<feature type="binding site" evidence="1">
    <location>
        <position position="196"/>
    </location>
    <ligand>
        <name>Mg(2+)</name>
        <dbReference type="ChEBI" id="CHEBI:18420"/>
    </ligand>
</feature>
<feature type="binding site" evidence="1">
    <location>
        <position position="287"/>
    </location>
    <ligand>
        <name>substrate</name>
    </ligand>
</feature>
<feature type="binding site" evidence="1">
    <location>
        <position position="319"/>
    </location>
    <ligand>
        <name>substrate</name>
    </ligand>
</feature>
<feature type="binding site" evidence="1">
    <location>
        <position position="371"/>
    </location>
    <ligand>
        <name>substrate</name>
    </ligand>
</feature>
<feature type="site" description="Transition state stabilizer" evidence="1">
    <location>
        <position position="326"/>
    </location>
</feature>
<feature type="modified residue" description="N6-carboxylysine" evidence="1">
    <location>
        <position position="193"/>
    </location>
</feature>
<proteinExistence type="inferred from homology"/>
<reference key="1">
    <citation type="journal article" date="2006" name="Science">
        <title>Genomic islands and the ecology and evolution of Prochlorococcus.</title>
        <authorList>
            <person name="Coleman M.L."/>
            <person name="Sullivan M.B."/>
            <person name="Martiny A.C."/>
            <person name="Steglich C."/>
            <person name="Barry K."/>
            <person name="Delong E.F."/>
            <person name="Chisholm S.W."/>
        </authorList>
    </citation>
    <scope>NUCLEOTIDE SEQUENCE [LARGE SCALE GENOMIC DNA]</scope>
    <source>
        <strain>MIT 9312</strain>
    </source>
</reference>
<name>RBL_PROM9</name>
<gene>
    <name evidence="1" type="primary">cbbL</name>
    <name evidence="1" type="synonym">rbcL</name>
    <name type="ordered locus">PMT9312_0550</name>
</gene>
<organism>
    <name type="scientific">Prochlorococcus marinus (strain MIT 9312)</name>
    <dbReference type="NCBI Taxonomy" id="74546"/>
    <lineage>
        <taxon>Bacteria</taxon>
        <taxon>Bacillati</taxon>
        <taxon>Cyanobacteriota</taxon>
        <taxon>Cyanophyceae</taxon>
        <taxon>Synechococcales</taxon>
        <taxon>Prochlorococcaceae</taxon>
        <taxon>Prochlorococcus</taxon>
    </lineage>
</organism>